<sequence length="231" mass="24761">MSNTPIELKGSSFTLSVVHLHEAEPKVIHQALEDKIAQAPAFLKHAPVVLNVSALEDPVNWSAMHKAVSATGLRVIGVSGCKDAQLKAEIEKMGLPILTEGKEKSPRPAPAPQAPAQNTTPVTKTRLIDTPVRSGQRIYAPQCDLIVTSHVSAGAELIADGNIHVYGMMRGRALAGASGDRETQIFCTNLMAELVSIAGEYWLSDQIPAEFYGKAARLQLVENALTVQPLN</sequence>
<proteinExistence type="inferred from homology"/>
<protein>
    <recommendedName>
        <fullName evidence="1">Probable septum site-determining protein MinC</fullName>
    </recommendedName>
</protein>
<accession>B7MTV4</accession>
<keyword id="KW-0131">Cell cycle</keyword>
<keyword id="KW-0132">Cell division</keyword>
<keyword id="KW-0717">Septation</keyword>
<reference key="1">
    <citation type="journal article" date="2009" name="PLoS Genet.">
        <title>Organised genome dynamics in the Escherichia coli species results in highly diverse adaptive paths.</title>
        <authorList>
            <person name="Touchon M."/>
            <person name="Hoede C."/>
            <person name="Tenaillon O."/>
            <person name="Barbe V."/>
            <person name="Baeriswyl S."/>
            <person name="Bidet P."/>
            <person name="Bingen E."/>
            <person name="Bonacorsi S."/>
            <person name="Bouchier C."/>
            <person name="Bouvet O."/>
            <person name="Calteau A."/>
            <person name="Chiapello H."/>
            <person name="Clermont O."/>
            <person name="Cruveiller S."/>
            <person name="Danchin A."/>
            <person name="Diard M."/>
            <person name="Dossat C."/>
            <person name="Karoui M.E."/>
            <person name="Frapy E."/>
            <person name="Garry L."/>
            <person name="Ghigo J.M."/>
            <person name="Gilles A.M."/>
            <person name="Johnson J."/>
            <person name="Le Bouguenec C."/>
            <person name="Lescat M."/>
            <person name="Mangenot S."/>
            <person name="Martinez-Jehanne V."/>
            <person name="Matic I."/>
            <person name="Nassif X."/>
            <person name="Oztas S."/>
            <person name="Petit M.A."/>
            <person name="Pichon C."/>
            <person name="Rouy Z."/>
            <person name="Ruf C.S."/>
            <person name="Schneider D."/>
            <person name="Tourret J."/>
            <person name="Vacherie B."/>
            <person name="Vallenet D."/>
            <person name="Medigue C."/>
            <person name="Rocha E.P.C."/>
            <person name="Denamur E."/>
        </authorList>
    </citation>
    <scope>NUCLEOTIDE SEQUENCE [LARGE SCALE GENOMIC DNA]</scope>
    <source>
        <strain>ED1a</strain>
    </source>
</reference>
<organism>
    <name type="scientific">Escherichia coli O81 (strain ED1a)</name>
    <dbReference type="NCBI Taxonomy" id="585397"/>
    <lineage>
        <taxon>Bacteria</taxon>
        <taxon>Pseudomonadati</taxon>
        <taxon>Pseudomonadota</taxon>
        <taxon>Gammaproteobacteria</taxon>
        <taxon>Enterobacterales</taxon>
        <taxon>Enterobacteriaceae</taxon>
        <taxon>Escherichia</taxon>
    </lineage>
</organism>
<name>MINC_ECO81</name>
<feature type="chain" id="PRO_1000191250" description="Probable septum site-determining protein MinC">
    <location>
        <begin position="1"/>
        <end position="231"/>
    </location>
</feature>
<feature type="region of interest" description="Disordered" evidence="2">
    <location>
        <begin position="100"/>
        <end position="125"/>
    </location>
</feature>
<evidence type="ECO:0000255" key="1">
    <source>
        <dbReference type="HAMAP-Rule" id="MF_00267"/>
    </source>
</evidence>
<evidence type="ECO:0000256" key="2">
    <source>
        <dbReference type="SAM" id="MobiDB-lite"/>
    </source>
</evidence>
<dbReference type="EMBL" id="CU928162">
    <property type="protein sequence ID" value="CAR07518.1"/>
    <property type="molecule type" value="Genomic_DNA"/>
</dbReference>
<dbReference type="RefSeq" id="WP_001295990.1">
    <property type="nucleotide sequence ID" value="NC_011745.1"/>
</dbReference>
<dbReference type="SMR" id="B7MTV4"/>
<dbReference type="KEGG" id="ecq:ECED1_1318"/>
<dbReference type="HOGENOM" id="CLU_067812_0_1_6"/>
<dbReference type="Proteomes" id="UP000000748">
    <property type="component" value="Chromosome"/>
</dbReference>
<dbReference type="GO" id="GO:0000902">
    <property type="term" value="P:cell morphogenesis"/>
    <property type="evidence" value="ECO:0007669"/>
    <property type="project" value="InterPro"/>
</dbReference>
<dbReference type="GO" id="GO:0000917">
    <property type="term" value="P:division septum assembly"/>
    <property type="evidence" value="ECO:0007669"/>
    <property type="project" value="UniProtKB-KW"/>
</dbReference>
<dbReference type="GO" id="GO:0051302">
    <property type="term" value="P:regulation of cell division"/>
    <property type="evidence" value="ECO:0007669"/>
    <property type="project" value="InterPro"/>
</dbReference>
<dbReference type="GO" id="GO:1901891">
    <property type="term" value="P:regulation of cell septum assembly"/>
    <property type="evidence" value="ECO:0007669"/>
    <property type="project" value="InterPro"/>
</dbReference>
<dbReference type="FunFam" id="2.160.20.70:FF:000002">
    <property type="entry name" value="Probable septum site-determining protein MinC"/>
    <property type="match status" value="1"/>
</dbReference>
<dbReference type="Gene3D" id="2.160.20.70">
    <property type="match status" value="1"/>
</dbReference>
<dbReference type="Gene3D" id="3.30.70.260">
    <property type="match status" value="1"/>
</dbReference>
<dbReference type="HAMAP" id="MF_00267">
    <property type="entry name" value="MinC"/>
    <property type="match status" value="1"/>
</dbReference>
<dbReference type="InterPro" id="IPR016098">
    <property type="entry name" value="CAP/MinC_C"/>
</dbReference>
<dbReference type="InterPro" id="IPR013033">
    <property type="entry name" value="MinC"/>
</dbReference>
<dbReference type="InterPro" id="IPR036145">
    <property type="entry name" value="MinC_C_sf"/>
</dbReference>
<dbReference type="InterPro" id="IPR007874">
    <property type="entry name" value="MinC_N"/>
</dbReference>
<dbReference type="InterPro" id="IPR005526">
    <property type="entry name" value="Septum_form_inhib_MinC_C"/>
</dbReference>
<dbReference type="NCBIfam" id="TIGR01222">
    <property type="entry name" value="minC"/>
    <property type="match status" value="1"/>
</dbReference>
<dbReference type="PANTHER" id="PTHR34108">
    <property type="entry name" value="SEPTUM SITE-DETERMINING PROTEIN MINC"/>
    <property type="match status" value="1"/>
</dbReference>
<dbReference type="PANTHER" id="PTHR34108:SF1">
    <property type="entry name" value="SEPTUM SITE-DETERMINING PROTEIN MINC"/>
    <property type="match status" value="1"/>
</dbReference>
<dbReference type="Pfam" id="PF03775">
    <property type="entry name" value="MinC_C"/>
    <property type="match status" value="1"/>
</dbReference>
<dbReference type="Pfam" id="PF05209">
    <property type="entry name" value="MinC_N"/>
    <property type="match status" value="1"/>
</dbReference>
<dbReference type="SUPFAM" id="SSF63848">
    <property type="entry name" value="Cell-division inhibitor MinC, C-terminal domain"/>
    <property type="match status" value="1"/>
</dbReference>
<comment type="function">
    <text evidence="1">Cell division inhibitor that blocks the formation of polar Z ring septums. Rapidly oscillates between the poles of the cell to destabilize FtsZ filaments that have formed before they mature into polar Z rings. Prevents FtsZ polymerization.</text>
</comment>
<comment type="subunit">
    <text evidence="1">Interacts with MinD and FtsZ.</text>
</comment>
<comment type="similarity">
    <text evidence="1">Belongs to the MinC family.</text>
</comment>
<gene>
    <name evidence="1" type="primary">minC</name>
    <name type="ordered locus">ECED1_1318</name>
</gene>